<organism>
    <name type="scientific">Chlorobaculum parvum (strain DSM 263 / NCIMB 8327)</name>
    <name type="common">Chlorobium vibrioforme subsp. thiosulfatophilum</name>
    <dbReference type="NCBI Taxonomy" id="517417"/>
    <lineage>
        <taxon>Bacteria</taxon>
        <taxon>Pseudomonadati</taxon>
        <taxon>Chlorobiota</taxon>
        <taxon>Chlorobiia</taxon>
        <taxon>Chlorobiales</taxon>
        <taxon>Chlorobiaceae</taxon>
        <taxon>Chlorobaculum</taxon>
    </lineage>
</organism>
<comment type="function">
    <text evidence="1">Catalyzes the dephosphorylation of undecaprenyl diphosphate (UPP). Confers resistance to bacitracin.</text>
</comment>
<comment type="catalytic activity">
    <reaction evidence="1">
        <text>di-trans,octa-cis-undecaprenyl diphosphate + H2O = di-trans,octa-cis-undecaprenyl phosphate + phosphate + H(+)</text>
        <dbReference type="Rhea" id="RHEA:28094"/>
        <dbReference type="ChEBI" id="CHEBI:15377"/>
        <dbReference type="ChEBI" id="CHEBI:15378"/>
        <dbReference type="ChEBI" id="CHEBI:43474"/>
        <dbReference type="ChEBI" id="CHEBI:58405"/>
        <dbReference type="ChEBI" id="CHEBI:60392"/>
        <dbReference type="EC" id="3.6.1.27"/>
    </reaction>
</comment>
<comment type="subcellular location">
    <subcellularLocation>
        <location evidence="1">Cell inner membrane</location>
        <topology evidence="1">Multi-pass membrane protein</topology>
    </subcellularLocation>
</comment>
<comment type="miscellaneous">
    <text>Bacitracin is thought to be involved in the inhibition of peptidoglycan synthesis by sequestering undecaprenyl diphosphate, thereby reducing the pool of lipid carrier available.</text>
</comment>
<comment type="similarity">
    <text evidence="1">Belongs to the UppP family.</text>
</comment>
<reference key="1">
    <citation type="submission" date="2008-06" db="EMBL/GenBank/DDBJ databases">
        <title>Complete sequence of Chlorobaculum parvum NCIB 8327.</title>
        <authorList>
            <consortium name="US DOE Joint Genome Institute"/>
            <person name="Lucas S."/>
            <person name="Copeland A."/>
            <person name="Lapidus A."/>
            <person name="Glavina del Rio T."/>
            <person name="Dalin E."/>
            <person name="Tice H."/>
            <person name="Bruce D."/>
            <person name="Goodwin L."/>
            <person name="Pitluck S."/>
            <person name="Schmutz J."/>
            <person name="Larimer F."/>
            <person name="Land M."/>
            <person name="Hauser L."/>
            <person name="Kyrpides N."/>
            <person name="Mikhailova N."/>
            <person name="Zhao F."/>
            <person name="Li T."/>
            <person name="Liu Z."/>
            <person name="Overmann J."/>
            <person name="Bryant D.A."/>
            <person name="Richardson P."/>
        </authorList>
    </citation>
    <scope>NUCLEOTIDE SEQUENCE [LARGE SCALE GENOMIC DNA]</scope>
    <source>
        <strain>DSM 263 / NCIMB 8327</strain>
    </source>
</reference>
<keyword id="KW-0046">Antibiotic resistance</keyword>
<keyword id="KW-0997">Cell inner membrane</keyword>
<keyword id="KW-1003">Cell membrane</keyword>
<keyword id="KW-0133">Cell shape</keyword>
<keyword id="KW-0961">Cell wall biogenesis/degradation</keyword>
<keyword id="KW-0378">Hydrolase</keyword>
<keyword id="KW-0472">Membrane</keyword>
<keyword id="KW-0573">Peptidoglycan synthesis</keyword>
<keyword id="KW-0812">Transmembrane</keyword>
<keyword id="KW-1133">Transmembrane helix</keyword>
<feature type="chain" id="PRO_1000197356" description="Undecaprenyl-diphosphatase">
    <location>
        <begin position="1"/>
        <end position="282"/>
    </location>
</feature>
<feature type="transmembrane region" description="Helical" evidence="1">
    <location>
        <begin position="40"/>
        <end position="60"/>
    </location>
</feature>
<feature type="transmembrane region" description="Helical" evidence="1">
    <location>
        <begin position="89"/>
        <end position="109"/>
    </location>
</feature>
<feature type="transmembrane region" description="Helical" evidence="1">
    <location>
        <begin position="113"/>
        <end position="133"/>
    </location>
</feature>
<feature type="transmembrane region" description="Helical" evidence="1">
    <location>
        <begin position="150"/>
        <end position="170"/>
    </location>
</feature>
<feature type="transmembrane region" description="Helical" evidence="1">
    <location>
        <begin position="196"/>
        <end position="216"/>
    </location>
</feature>
<feature type="transmembrane region" description="Helical" evidence="1">
    <location>
        <begin position="230"/>
        <end position="250"/>
    </location>
</feature>
<feature type="transmembrane region" description="Helical" evidence="1">
    <location>
        <begin position="258"/>
        <end position="278"/>
    </location>
</feature>
<gene>
    <name evidence="1" type="primary">uppP</name>
    <name type="ordered locus">Cpar_1706</name>
</gene>
<dbReference type="EC" id="3.6.1.27" evidence="1"/>
<dbReference type="EMBL" id="CP001099">
    <property type="protein sequence ID" value="ACF12098.1"/>
    <property type="molecule type" value="Genomic_DNA"/>
</dbReference>
<dbReference type="RefSeq" id="WP_012502931.1">
    <property type="nucleotide sequence ID" value="NC_011027.1"/>
</dbReference>
<dbReference type="SMR" id="B3QQ95"/>
<dbReference type="STRING" id="517417.Cpar_1706"/>
<dbReference type="KEGG" id="cpc:Cpar_1706"/>
<dbReference type="eggNOG" id="COG1968">
    <property type="taxonomic scope" value="Bacteria"/>
</dbReference>
<dbReference type="HOGENOM" id="CLU_060296_1_0_10"/>
<dbReference type="OrthoDB" id="9808289at2"/>
<dbReference type="Proteomes" id="UP000008811">
    <property type="component" value="Chromosome"/>
</dbReference>
<dbReference type="GO" id="GO:0005886">
    <property type="term" value="C:plasma membrane"/>
    <property type="evidence" value="ECO:0007669"/>
    <property type="project" value="UniProtKB-SubCell"/>
</dbReference>
<dbReference type="GO" id="GO:0050380">
    <property type="term" value="F:undecaprenyl-diphosphatase activity"/>
    <property type="evidence" value="ECO:0007669"/>
    <property type="project" value="UniProtKB-UniRule"/>
</dbReference>
<dbReference type="GO" id="GO:0071555">
    <property type="term" value="P:cell wall organization"/>
    <property type="evidence" value="ECO:0007669"/>
    <property type="project" value="UniProtKB-KW"/>
</dbReference>
<dbReference type="GO" id="GO:0009252">
    <property type="term" value="P:peptidoglycan biosynthetic process"/>
    <property type="evidence" value="ECO:0007669"/>
    <property type="project" value="UniProtKB-KW"/>
</dbReference>
<dbReference type="GO" id="GO:0008360">
    <property type="term" value="P:regulation of cell shape"/>
    <property type="evidence" value="ECO:0007669"/>
    <property type="project" value="UniProtKB-KW"/>
</dbReference>
<dbReference type="GO" id="GO:0046677">
    <property type="term" value="P:response to antibiotic"/>
    <property type="evidence" value="ECO:0007669"/>
    <property type="project" value="UniProtKB-UniRule"/>
</dbReference>
<dbReference type="HAMAP" id="MF_01006">
    <property type="entry name" value="Undec_diphosphatase"/>
    <property type="match status" value="1"/>
</dbReference>
<dbReference type="InterPro" id="IPR003824">
    <property type="entry name" value="UppP"/>
</dbReference>
<dbReference type="NCBIfam" id="NF001392">
    <property type="entry name" value="PRK00281.2-1"/>
    <property type="match status" value="1"/>
</dbReference>
<dbReference type="NCBIfam" id="TIGR00753">
    <property type="entry name" value="undec_PP_bacA"/>
    <property type="match status" value="1"/>
</dbReference>
<dbReference type="PANTHER" id="PTHR30622">
    <property type="entry name" value="UNDECAPRENYL-DIPHOSPHATASE"/>
    <property type="match status" value="1"/>
</dbReference>
<dbReference type="PANTHER" id="PTHR30622:SF4">
    <property type="entry name" value="UNDECAPRENYL-DIPHOSPHATASE"/>
    <property type="match status" value="1"/>
</dbReference>
<dbReference type="Pfam" id="PF02673">
    <property type="entry name" value="BacA"/>
    <property type="match status" value="1"/>
</dbReference>
<sequence length="282" mass="30417">MNLFQAIILGIVQGLTEFLPISSSAHLRIVPALAGWDDPGAAFTAIVQIGTLAAVLIYFMKDIISIVGAVVSDLLKGKPLASDESRTGWMIAAGTIPIVVFGLAFKDDIETTLRSLYWVSAALIALALVLSIAEKHTSNRARQGRRGKAISEITWLDAMIIGFAQAMALIPGSSRSGVTITAGLFRNLDRETSARFSFLLSLPSVFAAGIYQLYKTWDVITASTDNMINIAVATVFAFIFGYLSIAFLLTYLKRHSTGIFIGYRLLLGISLIIMIGTGHLMP</sequence>
<accession>B3QQ95</accession>
<protein>
    <recommendedName>
        <fullName evidence="1">Undecaprenyl-diphosphatase</fullName>
        <ecNumber evidence="1">3.6.1.27</ecNumber>
    </recommendedName>
    <alternativeName>
        <fullName evidence="1">Bacitracin resistance protein</fullName>
    </alternativeName>
    <alternativeName>
        <fullName evidence="1">Undecaprenyl pyrophosphate phosphatase</fullName>
    </alternativeName>
</protein>
<evidence type="ECO:0000255" key="1">
    <source>
        <dbReference type="HAMAP-Rule" id="MF_01006"/>
    </source>
</evidence>
<name>UPPP_CHLP8</name>
<proteinExistence type="inferred from homology"/>